<comment type="function">
    <text evidence="1">Catalyzes the formation of acetyl phosphate from acetate and ATP. Can also catalyze the reverse reaction.</text>
</comment>
<comment type="catalytic activity">
    <reaction evidence="1">
        <text>acetate + ATP = acetyl phosphate + ADP</text>
        <dbReference type="Rhea" id="RHEA:11352"/>
        <dbReference type="ChEBI" id="CHEBI:22191"/>
        <dbReference type="ChEBI" id="CHEBI:30089"/>
        <dbReference type="ChEBI" id="CHEBI:30616"/>
        <dbReference type="ChEBI" id="CHEBI:456216"/>
        <dbReference type="EC" id="2.7.2.1"/>
    </reaction>
</comment>
<comment type="cofactor">
    <cofactor evidence="1">
        <name>Mg(2+)</name>
        <dbReference type="ChEBI" id="CHEBI:18420"/>
    </cofactor>
    <cofactor evidence="1">
        <name>Mn(2+)</name>
        <dbReference type="ChEBI" id="CHEBI:29035"/>
    </cofactor>
    <text evidence="1">Mg(2+). Can also accept Mn(2+).</text>
</comment>
<comment type="pathway">
    <text evidence="1">Metabolic intermediate biosynthesis; acetyl-CoA biosynthesis; acetyl-CoA from acetate: step 1/2.</text>
</comment>
<comment type="subunit">
    <text evidence="1">Homodimer.</text>
</comment>
<comment type="subcellular location">
    <subcellularLocation>
        <location evidence="1">Cytoplasm</location>
    </subcellularLocation>
</comment>
<comment type="similarity">
    <text evidence="1">Belongs to the acetokinase family.</text>
</comment>
<organism>
    <name type="scientific">Clostridium botulinum (strain Alaska E43 / Type E3)</name>
    <dbReference type="NCBI Taxonomy" id="508767"/>
    <lineage>
        <taxon>Bacteria</taxon>
        <taxon>Bacillati</taxon>
        <taxon>Bacillota</taxon>
        <taxon>Clostridia</taxon>
        <taxon>Eubacteriales</taxon>
        <taxon>Clostridiaceae</taxon>
        <taxon>Clostridium</taxon>
    </lineage>
</organism>
<name>ACKA_CLOBA</name>
<keyword id="KW-0067">ATP-binding</keyword>
<keyword id="KW-0963">Cytoplasm</keyword>
<keyword id="KW-0418">Kinase</keyword>
<keyword id="KW-0460">Magnesium</keyword>
<keyword id="KW-0479">Metal-binding</keyword>
<keyword id="KW-0547">Nucleotide-binding</keyword>
<keyword id="KW-0808">Transferase</keyword>
<feature type="chain" id="PRO_1000089966" description="Acetate kinase">
    <location>
        <begin position="1"/>
        <end position="398"/>
    </location>
</feature>
<feature type="active site" description="Proton donor/acceptor" evidence="1">
    <location>
        <position position="148"/>
    </location>
</feature>
<feature type="binding site" evidence="1">
    <location>
        <position position="7"/>
    </location>
    <ligand>
        <name>Mg(2+)</name>
        <dbReference type="ChEBI" id="CHEBI:18420"/>
    </ligand>
</feature>
<feature type="binding site" evidence="1">
    <location>
        <position position="14"/>
    </location>
    <ligand>
        <name>ATP</name>
        <dbReference type="ChEBI" id="CHEBI:30616"/>
    </ligand>
</feature>
<feature type="binding site" evidence="1">
    <location>
        <position position="91"/>
    </location>
    <ligand>
        <name>substrate</name>
    </ligand>
</feature>
<feature type="binding site" evidence="1">
    <location>
        <begin position="208"/>
        <end position="212"/>
    </location>
    <ligand>
        <name>ATP</name>
        <dbReference type="ChEBI" id="CHEBI:30616"/>
    </ligand>
</feature>
<feature type="binding site" evidence="1">
    <location>
        <begin position="283"/>
        <end position="285"/>
    </location>
    <ligand>
        <name>ATP</name>
        <dbReference type="ChEBI" id="CHEBI:30616"/>
    </ligand>
</feature>
<feature type="binding site" evidence="1">
    <location>
        <begin position="331"/>
        <end position="335"/>
    </location>
    <ligand>
        <name>ATP</name>
        <dbReference type="ChEBI" id="CHEBI:30616"/>
    </ligand>
</feature>
<feature type="binding site" evidence="1">
    <location>
        <position position="386"/>
    </location>
    <ligand>
        <name>Mg(2+)</name>
        <dbReference type="ChEBI" id="CHEBI:18420"/>
    </ligand>
</feature>
<feature type="site" description="Transition state stabilizer" evidence="1">
    <location>
        <position position="180"/>
    </location>
</feature>
<feature type="site" description="Transition state stabilizer" evidence="1">
    <location>
        <position position="241"/>
    </location>
</feature>
<sequence length="398" mass="43451">MKVLVINCGSSSLKYQLIDMTTEDALAEGLVERIGINGSILTQKVKGREKYIVEQPLKDHQDAIELVLKSLIDENHGVIKSMDEISAVGHRVVHGGEKYSKSVLVNDEVMKNIEACIKLAPLHNPPNIIGIKACEELMPNTPMVCVFDTAFHQTMPEKAYMYPLPYEYYTEDHIRKYGFHGTSHKYVANKVAEVMKKDASELKTVTCHLGNGVSITAVDGGKSIDTTMGFTPLAGTIMGSRCGDIDPAIVTYLIKEKGYSADEVNDILNKKSGILGVSGVGTDFRDIRSAMGENNKRAILATDIFGYQIKKQIGAYAAAMGGLDTIVFTAGIGEHAPEVRIRALTGLEFIGVELDEEKNNSHDIGEGLLISKESSKVKVYVIPTNEELMIAKETLALV</sequence>
<reference key="1">
    <citation type="submission" date="2008-05" db="EMBL/GenBank/DDBJ databases">
        <title>Complete genome sequence of Clostridium botulinum E3 str. Alaska E43.</title>
        <authorList>
            <person name="Brinkac L.M."/>
            <person name="Brown J.L."/>
            <person name="Bruce D."/>
            <person name="Detter C."/>
            <person name="Munk C."/>
            <person name="Smith L.A."/>
            <person name="Smith T.J."/>
            <person name="Sutton G."/>
            <person name="Brettin T.S."/>
        </authorList>
    </citation>
    <scope>NUCLEOTIDE SEQUENCE [LARGE SCALE GENOMIC DNA]</scope>
    <source>
        <strain>Alaska E43 / Type E3</strain>
    </source>
</reference>
<evidence type="ECO:0000255" key="1">
    <source>
        <dbReference type="HAMAP-Rule" id="MF_00020"/>
    </source>
</evidence>
<gene>
    <name evidence="1" type="primary">ackA</name>
    <name type="ordered locus">CLH_1186</name>
</gene>
<dbReference type="EC" id="2.7.2.1" evidence="1"/>
<dbReference type="EMBL" id="CP001078">
    <property type="protein sequence ID" value="ACD51218.1"/>
    <property type="molecule type" value="Genomic_DNA"/>
</dbReference>
<dbReference type="RefSeq" id="WP_012449621.1">
    <property type="nucleotide sequence ID" value="NC_010723.1"/>
</dbReference>
<dbReference type="SMR" id="B2V4D1"/>
<dbReference type="KEGG" id="cbt:CLH_1186"/>
<dbReference type="HOGENOM" id="CLU_020352_0_1_9"/>
<dbReference type="UniPathway" id="UPA00340">
    <property type="reaction ID" value="UER00458"/>
</dbReference>
<dbReference type="GO" id="GO:0005737">
    <property type="term" value="C:cytoplasm"/>
    <property type="evidence" value="ECO:0007669"/>
    <property type="project" value="UniProtKB-SubCell"/>
</dbReference>
<dbReference type="GO" id="GO:0008776">
    <property type="term" value="F:acetate kinase activity"/>
    <property type="evidence" value="ECO:0007669"/>
    <property type="project" value="UniProtKB-UniRule"/>
</dbReference>
<dbReference type="GO" id="GO:0005524">
    <property type="term" value="F:ATP binding"/>
    <property type="evidence" value="ECO:0007669"/>
    <property type="project" value="UniProtKB-KW"/>
</dbReference>
<dbReference type="GO" id="GO:0000287">
    <property type="term" value="F:magnesium ion binding"/>
    <property type="evidence" value="ECO:0007669"/>
    <property type="project" value="UniProtKB-UniRule"/>
</dbReference>
<dbReference type="GO" id="GO:0006083">
    <property type="term" value="P:acetate metabolic process"/>
    <property type="evidence" value="ECO:0007669"/>
    <property type="project" value="TreeGrafter"/>
</dbReference>
<dbReference type="GO" id="GO:0006085">
    <property type="term" value="P:acetyl-CoA biosynthetic process"/>
    <property type="evidence" value="ECO:0007669"/>
    <property type="project" value="UniProtKB-UniRule"/>
</dbReference>
<dbReference type="CDD" id="cd24010">
    <property type="entry name" value="ASKHA_NBD_AcK_PK"/>
    <property type="match status" value="1"/>
</dbReference>
<dbReference type="Gene3D" id="3.30.420.40">
    <property type="match status" value="2"/>
</dbReference>
<dbReference type="HAMAP" id="MF_00020">
    <property type="entry name" value="Acetate_kinase"/>
    <property type="match status" value="1"/>
</dbReference>
<dbReference type="InterPro" id="IPR004372">
    <property type="entry name" value="Ac/propionate_kinase"/>
</dbReference>
<dbReference type="InterPro" id="IPR000890">
    <property type="entry name" value="Aliphatic_acid_kin_short-chain"/>
</dbReference>
<dbReference type="InterPro" id="IPR023865">
    <property type="entry name" value="Aliphatic_acid_kinase_CS"/>
</dbReference>
<dbReference type="InterPro" id="IPR043129">
    <property type="entry name" value="ATPase_NBD"/>
</dbReference>
<dbReference type="NCBIfam" id="TIGR00016">
    <property type="entry name" value="ackA"/>
    <property type="match status" value="1"/>
</dbReference>
<dbReference type="PANTHER" id="PTHR21060">
    <property type="entry name" value="ACETATE KINASE"/>
    <property type="match status" value="1"/>
</dbReference>
<dbReference type="PANTHER" id="PTHR21060:SF15">
    <property type="entry name" value="ACETATE KINASE-RELATED"/>
    <property type="match status" value="1"/>
</dbReference>
<dbReference type="Pfam" id="PF00871">
    <property type="entry name" value="Acetate_kinase"/>
    <property type="match status" value="1"/>
</dbReference>
<dbReference type="PIRSF" id="PIRSF000722">
    <property type="entry name" value="Acetate_prop_kin"/>
    <property type="match status" value="1"/>
</dbReference>
<dbReference type="PRINTS" id="PR00471">
    <property type="entry name" value="ACETATEKNASE"/>
</dbReference>
<dbReference type="SUPFAM" id="SSF53067">
    <property type="entry name" value="Actin-like ATPase domain"/>
    <property type="match status" value="2"/>
</dbReference>
<dbReference type="PROSITE" id="PS01075">
    <property type="entry name" value="ACETATE_KINASE_1"/>
    <property type="match status" value="1"/>
</dbReference>
<dbReference type="PROSITE" id="PS01076">
    <property type="entry name" value="ACETATE_KINASE_2"/>
    <property type="match status" value="1"/>
</dbReference>
<protein>
    <recommendedName>
        <fullName evidence="1">Acetate kinase</fullName>
        <ecNumber evidence="1">2.7.2.1</ecNumber>
    </recommendedName>
    <alternativeName>
        <fullName evidence="1">Acetokinase</fullName>
    </alternativeName>
</protein>
<proteinExistence type="inferred from homology"/>
<accession>B2V4D1</accession>